<feature type="chain" id="PRO_1000137494" description="Uncharacterized MFS-type transporter YcaD">
    <location>
        <begin position="1"/>
        <end position="382"/>
    </location>
</feature>
<feature type="transmembrane region" description="Helical" evidence="1">
    <location>
        <begin position="8"/>
        <end position="28"/>
    </location>
</feature>
<feature type="transmembrane region" description="Helical" evidence="1">
    <location>
        <begin position="45"/>
        <end position="65"/>
    </location>
</feature>
<feature type="transmembrane region" description="Helical" evidence="1">
    <location>
        <begin position="75"/>
        <end position="95"/>
    </location>
</feature>
<feature type="transmembrane region" description="Helical" evidence="1">
    <location>
        <begin position="102"/>
        <end position="122"/>
    </location>
</feature>
<feature type="transmembrane region" description="Helical" evidence="1">
    <location>
        <begin position="131"/>
        <end position="151"/>
    </location>
</feature>
<feature type="transmembrane region" description="Helical" evidence="1">
    <location>
        <begin position="157"/>
        <end position="177"/>
    </location>
</feature>
<feature type="transmembrane region" description="Helical" evidence="1">
    <location>
        <begin position="204"/>
        <end position="224"/>
    </location>
</feature>
<feature type="transmembrane region" description="Helical" evidence="1">
    <location>
        <begin position="231"/>
        <end position="251"/>
    </location>
</feature>
<feature type="transmembrane region" description="Helical" evidence="1">
    <location>
        <begin position="270"/>
        <end position="290"/>
    </location>
</feature>
<feature type="transmembrane region" description="Helical" evidence="1">
    <location>
        <begin position="291"/>
        <end position="311"/>
    </location>
</feature>
<feature type="transmembrane region" description="Helical" evidence="1">
    <location>
        <begin position="325"/>
        <end position="345"/>
    </location>
</feature>
<feature type="transmembrane region" description="Helical" evidence="1">
    <location>
        <begin position="349"/>
        <end position="369"/>
    </location>
</feature>
<reference key="1">
    <citation type="journal article" date="2008" name="Genome Res.">
        <title>Comparative genome analysis of Salmonella enteritidis PT4 and Salmonella gallinarum 287/91 provides insights into evolutionary and host adaptation pathways.</title>
        <authorList>
            <person name="Thomson N.R."/>
            <person name="Clayton D.J."/>
            <person name="Windhorst D."/>
            <person name="Vernikos G."/>
            <person name="Davidson S."/>
            <person name="Churcher C."/>
            <person name="Quail M.A."/>
            <person name="Stevens M."/>
            <person name="Jones M.A."/>
            <person name="Watson M."/>
            <person name="Barron A."/>
            <person name="Layton A."/>
            <person name="Pickard D."/>
            <person name="Kingsley R.A."/>
            <person name="Bignell A."/>
            <person name="Clark L."/>
            <person name="Harris B."/>
            <person name="Ormond D."/>
            <person name="Abdellah Z."/>
            <person name="Brooks K."/>
            <person name="Cherevach I."/>
            <person name="Chillingworth T."/>
            <person name="Woodward J."/>
            <person name="Norberczak H."/>
            <person name="Lord A."/>
            <person name="Arrowsmith C."/>
            <person name="Jagels K."/>
            <person name="Moule S."/>
            <person name="Mungall K."/>
            <person name="Saunders M."/>
            <person name="Whitehead S."/>
            <person name="Chabalgoity J.A."/>
            <person name="Maskell D."/>
            <person name="Humphreys T."/>
            <person name="Roberts M."/>
            <person name="Barrow P.A."/>
            <person name="Dougan G."/>
            <person name="Parkhill J."/>
        </authorList>
    </citation>
    <scope>NUCLEOTIDE SEQUENCE [LARGE SCALE GENOMIC DNA]</scope>
    <source>
        <strain>P125109</strain>
    </source>
</reference>
<dbReference type="EMBL" id="AM933172">
    <property type="protein sequence ID" value="CAR32455.1"/>
    <property type="molecule type" value="Genomic_DNA"/>
</dbReference>
<dbReference type="RefSeq" id="WP_000109268.1">
    <property type="nucleotide sequence ID" value="NC_011294.1"/>
</dbReference>
<dbReference type="SMR" id="B5QYP8"/>
<dbReference type="KEGG" id="set:SEN0872"/>
<dbReference type="HOGENOM" id="CLU_035018_1_2_6"/>
<dbReference type="Proteomes" id="UP000000613">
    <property type="component" value="Chromosome"/>
</dbReference>
<dbReference type="GO" id="GO:0005886">
    <property type="term" value="C:plasma membrane"/>
    <property type="evidence" value="ECO:0007669"/>
    <property type="project" value="UniProtKB-SubCell"/>
</dbReference>
<dbReference type="GO" id="GO:0022857">
    <property type="term" value="F:transmembrane transporter activity"/>
    <property type="evidence" value="ECO:0007669"/>
    <property type="project" value="UniProtKB-UniRule"/>
</dbReference>
<dbReference type="CDD" id="cd17477">
    <property type="entry name" value="MFS_YcaD_like"/>
    <property type="match status" value="1"/>
</dbReference>
<dbReference type="FunFam" id="1.20.1250.20:FF:000041">
    <property type="entry name" value="Uncharacterized MFS-type transporter YcaD"/>
    <property type="match status" value="1"/>
</dbReference>
<dbReference type="FunFam" id="1.20.1250.20:FF:000066">
    <property type="entry name" value="Uncharacterized MFS-type transporter YcaD"/>
    <property type="match status" value="1"/>
</dbReference>
<dbReference type="Gene3D" id="1.20.1250.20">
    <property type="entry name" value="MFS general substrate transporter like domains"/>
    <property type="match status" value="2"/>
</dbReference>
<dbReference type="HAMAP" id="MF_01149">
    <property type="entry name" value="MFS_YcaD"/>
    <property type="match status" value="1"/>
</dbReference>
<dbReference type="InterPro" id="IPR011701">
    <property type="entry name" value="MFS"/>
</dbReference>
<dbReference type="InterPro" id="IPR020846">
    <property type="entry name" value="MFS_dom"/>
</dbReference>
<dbReference type="InterPro" id="IPR036259">
    <property type="entry name" value="MFS_trans_sf"/>
</dbReference>
<dbReference type="InterPro" id="IPR023745">
    <property type="entry name" value="MFS_YcaD"/>
</dbReference>
<dbReference type="InterPro" id="IPR047200">
    <property type="entry name" value="MFS_YcaD-like"/>
</dbReference>
<dbReference type="NCBIfam" id="NF002962">
    <property type="entry name" value="PRK03633.1"/>
    <property type="match status" value="1"/>
</dbReference>
<dbReference type="PANTHER" id="PTHR23521">
    <property type="entry name" value="TRANSPORTER MFS SUPERFAMILY"/>
    <property type="match status" value="1"/>
</dbReference>
<dbReference type="PANTHER" id="PTHR23521:SF2">
    <property type="entry name" value="TRANSPORTER MFS SUPERFAMILY"/>
    <property type="match status" value="1"/>
</dbReference>
<dbReference type="Pfam" id="PF07690">
    <property type="entry name" value="MFS_1"/>
    <property type="match status" value="1"/>
</dbReference>
<dbReference type="SUPFAM" id="SSF103473">
    <property type="entry name" value="MFS general substrate transporter"/>
    <property type="match status" value="1"/>
</dbReference>
<dbReference type="PROSITE" id="PS50850">
    <property type="entry name" value="MFS"/>
    <property type="match status" value="1"/>
</dbReference>
<name>YCAD_SALEP</name>
<sequence length="382" mass="41520">MSTYTRPVMLLLCGLLLLTLAIAVLNTLVPLWLAQANLPTWQVGMVSSSYFTGNLVGTLFTGYLIKRIGFNRSYYLASLIFAAGCVGLGVMVGFWSWMSWRFIAGIGCAMIWVVVESALMCSGTSHNRGRLLAAYMMAYYMGTFLGQLLVSKVSGELLHVLPWVTGMILAGILPLLFTRIVNQQTQARHSSSISAMLKLRQARLGVNGCIISGIVLGSLYGLMPLYLKHQGMANASIGFWMAVLVSAGILGQWPMGRLADKFGRLLVLRVQVFVVILGSIAMLTQAAMAPALFILGAAGFTLYPVAMAWACEKVEHHQLVAMNQALLLSYTVGSLLGPSFAAMLMQNYSDNLLFIMIASVSFIYLLMLLRNAGQTPNPVAHI</sequence>
<accession>B5QYP8</accession>
<evidence type="ECO:0000255" key="1">
    <source>
        <dbReference type="HAMAP-Rule" id="MF_01149"/>
    </source>
</evidence>
<proteinExistence type="inferred from homology"/>
<keyword id="KW-0997">Cell inner membrane</keyword>
<keyword id="KW-1003">Cell membrane</keyword>
<keyword id="KW-0472">Membrane</keyword>
<keyword id="KW-0812">Transmembrane</keyword>
<keyword id="KW-1133">Transmembrane helix</keyword>
<keyword id="KW-0813">Transport</keyword>
<gene>
    <name evidence="1" type="primary">ycaD</name>
    <name type="ordered locus">SEN0872</name>
</gene>
<comment type="subcellular location">
    <subcellularLocation>
        <location evidence="1">Cell inner membrane</location>
        <topology evidence="1">Multi-pass membrane protein</topology>
    </subcellularLocation>
</comment>
<comment type="similarity">
    <text evidence="1">Belongs to the major facilitator superfamily. YcaD (TC 2.A.1.26) family.</text>
</comment>
<protein>
    <recommendedName>
        <fullName evidence="1">Uncharacterized MFS-type transporter YcaD</fullName>
    </recommendedName>
</protein>
<organism>
    <name type="scientific">Salmonella enteritidis PT4 (strain P125109)</name>
    <dbReference type="NCBI Taxonomy" id="550537"/>
    <lineage>
        <taxon>Bacteria</taxon>
        <taxon>Pseudomonadati</taxon>
        <taxon>Pseudomonadota</taxon>
        <taxon>Gammaproteobacteria</taxon>
        <taxon>Enterobacterales</taxon>
        <taxon>Enterobacteriaceae</taxon>
        <taxon>Salmonella</taxon>
    </lineage>
</organism>